<reference key="1">
    <citation type="journal article" date="2002" name="Nature">
        <title>Sequence and analysis of rice chromosome 4.</title>
        <authorList>
            <person name="Feng Q."/>
            <person name="Zhang Y."/>
            <person name="Hao P."/>
            <person name="Wang S."/>
            <person name="Fu G."/>
            <person name="Huang Y."/>
            <person name="Li Y."/>
            <person name="Zhu J."/>
            <person name="Liu Y."/>
            <person name="Hu X."/>
            <person name="Jia P."/>
            <person name="Zhang Y."/>
            <person name="Zhao Q."/>
            <person name="Ying K."/>
            <person name="Yu S."/>
            <person name="Tang Y."/>
            <person name="Weng Q."/>
            <person name="Zhang L."/>
            <person name="Lu Y."/>
            <person name="Mu J."/>
            <person name="Lu Y."/>
            <person name="Zhang L.S."/>
            <person name="Yu Z."/>
            <person name="Fan D."/>
            <person name="Liu X."/>
            <person name="Lu T."/>
            <person name="Li C."/>
            <person name="Wu Y."/>
            <person name="Sun T."/>
            <person name="Lei H."/>
            <person name="Li T."/>
            <person name="Hu H."/>
            <person name="Guan J."/>
            <person name="Wu M."/>
            <person name="Zhang R."/>
            <person name="Zhou B."/>
            <person name="Chen Z."/>
            <person name="Chen L."/>
            <person name="Jin Z."/>
            <person name="Wang R."/>
            <person name="Yin H."/>
            <person name="Cai Z."/>
            <person name="Ren S."/>
            <person name="Lv G."/>
            <person name="Gu W."/>
            <person name="Zhu G."/>
            <person name="Tu Y."/>
            <person name="Jia J."/>
            <person name="Zhang Y."/>
            <person name="Chen J."/>
            <person name="Kang H."/>
            <person name="Chen X."/>
            <person name="Shao C."/>
            <person name="Sun Y."/>
            <person name="Hu Q."/>
            <person name="Zhang X."/>
            <person name="Zhang W."/>
            <person name="Wang L."/>
            <person name="Ding C."/>
            <person name="Sheng H."/>
            <person name="Gu J."/>
            <person name="Chen S."/>
            <person name="Ni L."/>
            <person name="Zhu F."/>
            <person name="Chen W."/>
            <person name="Lan L."/>
            <person name="Lai Y."/>
            <person name="Cheng Z."/>
            <person name="Gu M."/>
            <person name="Jiang J."/>
            <person name="Li J."/>
            <person name="Hong G."/>
            <person name="Xue Y."/>
            <person name="Han B."/>
        </authorList>
    </citation>
    <scope>NUCLEOTIDE SEQUENCE [LARGE SCALE GENOMIC DNA]</scope>
    <source>
        <strain>cv. Nipponbare</strain>
    </source>
</reference>
<reference key="2">
    <citation type="journal article" date="2005" name="Nature">
        <title>The map-based sequence of the rice genome.</title>
        <authorList>
            <consortium name="International rice genome sequencing project (IRGSP)"/>
        </authorList>
    </citation>
    <scope>NUCLEOTIDE SEQUENCE [LARGE SCALE GENOMIC DNA]</scope>
    <source>
        <strain>cv. Nipponbare</strain>
    </source>
</reference>
<reference key="3">
    <citation type="journal article" date="2008" name="Nucleic Acids Res.">
        <title>The rice annotation project database (RAP-DB): 2008 update.</title>
        <authorList>
            <consortium name="The rice annotation project (RAP)"/>
        </authorList>
    </citation>
    <scope>GENOME REANNOTATION</scope>
    <source>
        <strain>cv. Nipponbare</strain>
    </source>
</reference>
<reference key="4">
    <citation type="journal article" date="2013" name="Rice">
        <title>Improvement of the Oryza sativa Nipponbare reference genome using next generation sequence and optical map data.</title>
        <authorList>
            <person name="Kawahara Y."/>
            <person name="de la Bastide M."/>
            <person name="Hamilton J.P."/>
            <person name="Kanamori H."/>
            <person name="McCombie W.R."/>
            <person name="Ouyang S."/>
            <person name="Schwartz D.C."/>
            <person name="Tanaka T."/>
            <person name="Wu J."/>
            <person name="Zhou S."/>
            <person name="Childs K.L."/>
            <person name="Davidson R.M."/>
            <person name="Lin H."/>
            <person name="Quesada-Ocampo L."/>
            <person name="Vaillancourt B."/>
            <person name="Sakai H."/>
            <person name="Lee S.S."/>
            <person name="Kim J."/>
            <person name="Numa H."/>
            <person name="Itoh T."/>
            <person name="Buell C.R."/>
            <person name="Matsumoto T."/>
        </authorList>
    </citation>
    <scope>GENOME REANNOTATION</scope>
    <source>
        <strain>cv. Nipponbare</strain>
    </source>
</reference>
<reference key="5">
    <citation type="journal article" date="2003" name="Science">
        <title>Collection, mapping, and annotation of over 28,000 cDNA clones from japonica rice.</title>
        <authorList>
            <consortium name="The rice full-length cDNA consortium"/>
        </authorList>
    </citation>
    <scope>NUCLEOTIDE SEQUENCE [LARGE SCALE MRNA]</scope>
    <source>
        <strain>cv. Nipponbare</strain>
    </source>
</reference>
<reference key="6">
    <citation type="journal article" date="2008" name="FEBS J.">
        <title>Identification of rice TUBBY-like genes and their evolution.</title>
        <authorList>
            <person name="Liu Q."/>
        </authorList>
    </citation>
    <scope>GENE FAMILY</scope>
    <scope>NOMENCLATURE</scope>
</reference>
<reference key="7">
    <citation type="journal article" date="2008" name="Genomics">
        <title>Genomewide comparative phylogenetic and molecular evolutionary analysis of tubby-like protein family in Arabidopsis, rice, and poplar.</title>
        <authorList>
            <person name="Yang Z."/>
            <person name="Zhou Y."/>
            <person name="Wang X."/>
            <person name="Gu S."/>
            <person name="Yu J."/>
            <person name="Liang G."/>
            <person name="Yan C."/>
            <person name="Xu C."/>
        </authorList>
    </citation>
    <scope>TISSUE SPECIFICITY</scope>
    <scope>GENE FAMILY</scope>
    <scope>NOMENCLATURE</scope>
</reference>
<comment type="tissue specificity">
    <text evidence="2">Ubiquitous.</text>
</comment>
<comment type="similarity">
    <text evidence="3">Belongs to the TUB family.</text>
</comment>
<evidence type="ECO:0000256" key="1">
    <source>
        <dbReference type="SAM" id="MobiDB-lite"/>
    </source>
</evidence>
<evidence type="ECO:0000269" key="2">
    <source>
    </source>
</evidence>
<evidence type="ECO:0000305" key="3"/>
<name>TLP7_ORYSJ</name>
<gene>
    <name type="primary">TULP7</name>
    <name type="synonym">TULP3</name>
    <name type="ordered locus">Os04g0687900</name>
    <name type="ordered locus">LOC_Os04g59130</name>
    <name type="ORF">OSJNBa0039K24.2</name>
</gene>
<proteinExistence type="evidence at transcript level"/>
<dbReference type="EMBL" id="AL606637">
    <property type="protein sequence ID" value="CAE01783.1"/>
    <property type="molecule type" value="Genomic_DNA"/>
</dbReference>
<dbReference type="EMBL" id="AP008210">
    <property type="protein sequence ID" value="BAF16249.1"/>
    <property type="molecule type" value="Genomic_DNA"/>
</dbReference>
<dbReference type="EMBL" id="AP014960">
    <property type="protein sequence ID" value="BAS91751.1"/>
    <property type="molecule type" value="Genomic_DNA"/>
</dbReference>
<dbReference type="EMBL" id="AK098928">
    <property type="status" value="NOT_ANNOTATED_CDS"/>
    <property type="molecule type" value="mRNA"/>
</dbReference>
<dbReference type="EMBL" id="AK104333">
    <property type="protein sequence ID" value="BAG96605.1"/>
    <property type="molecule type" value="mRNA"/>
</dbReference>
<dbReference type="RefSeq" id="XP_015636871.1">
    <property type="nucleotide sequence ID" value="XM_015781385.1"/>
</dbReference>
<dbReference type="SMR" id="Q7XSV4"/>
<dbReference type="FunCoup" id="Q7XSV4">
    <property type="interactions" value="2025"/>
</dbReference>
<dbReference type="STRING" id="39947.Q7XSV4"/>
<dbReference type="PaxDb" id="39947-Q7XSV4"/>
<dbReference type="EnsemblPlants" id="Os04t0687900-01">
    <property type="protein sequence ID" value="Os04t0687900-01"/>
    <property type="gene ID" value="Os04g0687900"/>
</dbReference>
<dbReference type="EnsemblPlants" id="Os04t0687900-03">
    <property type="protein sequence ID" value="Os04t0687900-03"/>
    <property type="gene ID" value="Os04g0687900"/>
</dbReference>
<dbReference type="Gramene" id="Os04t0687900-01">
    <property type="protein sequence ID" value="Os04t0687900-01"/>
    <property type="gene ID" value="Os04g0687900"/>
</dbReference>
<dbReference type="Gramene" id="Os04t0687900-03">
    <property type="protein sequence ID" value="Os04t0687900-03"/>
    <property type="gene ID" value="Os04g0687900"/>
</dbReference>
<dbReference type="KEGG" id="dosa:Os04g0687900"/>
<dbReference type="eggNOG" id="KOG2502">
    <property type="taxonomic scope" value="Eukaryota"/>
</dbReference>
<dbReference type="HOGENOM" id="CLU_028236_3_0_1"/>
<dbReference type="InParanoid" id="Q7XSV4"/>
<dbReference type="OMA" id="VRSPEIC"/>
<dbReference type="OrthoDB" id="8775810at2759"/>
<dbReference type="Proteomes" id="UP000000763">
    <property type="component" value="Chromosome 4"/>
</dbReference>
<dbReference type="Proteomes" id="UP000059680">
    <property type="component" value="Chromosome 4"/>
</dbReference>
<dbReference type="ExpressionAtlas" id="Q7XSV4">
    <property type="expression patterns" value="baseline and differential"/>
</dbReference>
<dbReference type="CDD" id="cd22153">
    <property type="entry name" value="F-box_AtTLP-like"/>
    <property type="match status" value="1"/>
</dbReference>
<dbReference type="Gene3D" id="1.20.1280.50">
    <property type="match status" value="1"/>
</dbReference>
<dbReference type="Gene3D" id="3.20.90.10">
    <property type="entry name" value="Tubby Protein, Chain A"/>
    <property type="match status" value="1"/>
</dbReference>
<dbReference type="InterPro" id="IPR036047">
    <property type="entry name" value="F-box-like_dom_sf"/>
</dbReference>
<dbReference type="InterPro" id="IPR001810">
    <property type="entry name" value="F-box_dom"/>
</dbReference>
<dbReference type="InterPro" id="IPR025659">
    <property type="entry name" value="Tubby-like_C"/>
</dbReference>
<dbReference type="InterPro" id="IPR000007">
    <property type="entry name" value="Tubby_C"/>
</dbReference>
<dbReference type="InterPro" id="IPR018066">
    <property type="entry name" value="Tubby_C_CS"/>
</dbReference>
<dbReference type="PANTHER" id="PTHR16517:SF38">
    <property type="entry name" value="TUBBY-LIKE F-BOX PROTEIN 7"/>
    <property type="match status" value="1"/>
</dbReference>
<dbReference type="PANTHER" id="PTHR16517">
    <property type="entry name" value="TUBBY-RELATED"/>
    <property type="match status" value="1"/>
</dbReference>
<dbReference type="Pfam" id="PF12937">
    <property type="entry name" value="F-box-like"/>
    <property type="match status" value="1"/>
</dbReference>
<dbReference type="Pfam" id="PF01167">
    <property type="entry name" value="Tub"/>
    <property type="match status" value="1"/>
</dbReference>
<dbReference type="PRINTS" id="PR01573">
    <property type="entry name" value="SUPERTUBBY"/>
</dbReference>
<dbReference type="SUPFAM" id="SSF81383">
    <property type="entry name" value="F-box domain"/>
    <property type="match status" value="1"/>
</dbReference>
<dbReference type="SUPFAM" id="SSF54518">
    <property type="entry name" value="Tubby C-terminal domain-like"/>
    <property type="match status" value="1"/>
</dbReference>
<dbReference type="PROSITE" id="PS01200">
    <property type="entry name" value="TUB_1"/>
    <property type="match status" value="1"/>
</dbReference>
<dbReference type="PROSITE" id="PS01201">
    <property type="entry name" value="TUB_2"/>
    <property type="match status" value="1"/>
</dbReference>
<sequence>MSFRSIVRDFRDSFGTLSKRSFEVKISGFSGRHRGKSIGPSSELDDTPVVAQQSKWAGLPPELLRDVMKRLEEDDSNWPSRKDVVACASVCTTWRDMCKDIVRNPEFCGKLTFPVSLKQPGPRDGVIQCFIKRDKSKLTYHLYLCLSSAVLDETGKFLLSAKRSRRTTHTDYIISMDSKNISRSSSGYIGKLRSNFLGTKFIIYDTQPPYNARTLCSQERTSRRFSSRKVSPKVPTGCYPIVQVNYELNVLGTRGPRRMQCAMHSIPASAVEPGGIVPGQPKELLPRLFEESFRSMATSFSKYSITDHSTDFSSSRFSEFGGGALQGQEQEQDGDDVNKERPLVLRNKAPRWHEQLQCWCLNFRGRVTVASVKNFQLIAAAPQPSSGAASEPSQAGQAAQQQTQPSQPSSSSSSSSSNHDTVILQFGKVAKDMFTMDYRYPLSAFQAFAICLTSFDTKLACE</sequence>
<organism>
    <name type="scientific">Oryza sativa subsp. japonica</name>
    <name type="common">Rice</name>
    <dbReference type="NCBI Taxonomy" id="39947"/>
    <lineage>
        <taxon>Eukaryota</taxon>
        <taxon>Viridiplantae</taxon>
        <taxon>Streptophyta</taxon>
        <taxon>Embryophyta</taxon>
        <taxon>Tracheophyta</taxon>
        <taxon>Spermatophyta</taxon>
        <taxon>Magnoliopsida</taxon>
        <taxon>Liliopsida</taxon>
        <taxon>Poales</taxon>
        <taxon>Poaceae</taxon>
        <taxon>BOP clade</taxon>
        <taxon>Oryzoideae</taxon>
        <taxon>Oryzeae</taxon>
        <taxon>Oryzinae</taxon>
        <taxon>Oryza</taxon>
        <taxon>Oryza sativa</taxon>
    </lineage>
</organism>
<accession>Q7XSV4</accession>
<accession>B7EW58</accession>
<keyword id="KW-1185">Reference proteome</keyword>
<feature type="chain" id="PRO_0000351126" description="Tubby-like F-box protein 7">
    <location>
        <begin position="1"/>
        <end position="462"/>
    </location>
</feature>
<feature type="domain" description="F-box">
    <location>
        <begin position="54"/>
        <end position="109"/>
    </location>
</feature>
<feature type="region of interest" description="Disordered" evidence="1">
    <location>
        <begin position="317"/>
        <end position="338"/>
    </location>
</feature>
<feature type="region of interest" description="Disordered" evidence="1">
    <location>
        <begin position="383"/>
        <end position="418"/>
    </location>
</feature>
<feature type="compositionally biased region" description="Low complexity" evidence="1">
    <location>
        <begin position="383"/>
        <end position="417"/>
    </location>
</feature>
<feature type="sequence conflict" description="In Ref. 5; AK098928." evidence="3" ref="5">
    <original>V</original>
    <variation>D</variation>
    <location>
        <position position="84"/>
    </location>
</feature>
<protein>
    <recommendedName>
        <fullName>Tubby-like F-box protein 7</fullName>
        <shortName>OsTLP7</shortName>
    </recommendedName>
    <alternativeName>
        <fullName>Tubby-like F-box protein 3</fullName>
        <shortName>OsTLP3</shortName>
    </alternativeName>
</protein>